<evidence type="ECO:0000250" key="1"/>
<evidence type="ECO:0000305" key="2"/>
<feature type="propeptide" id="PRO_0000031219" evidence="1">
    <location>
        <begin position="1"/>
        <end position="2"/>
    </location>
</feature>
<feature type="chain" id="PRO_0000031220" description="Ribulose bisphosphate carboxylase large chain">
    <location>
        <begin position="3"/>
        <end position="58" status="greater than"/>
    </location>
</feature>
<feature type="modified residue" description="N-acetylproline" evidence="1">
    <location>
        <position position="3"/>
    </location>
</feature>
<feature type="modified residue" description="N6,N6,N6-trimethyllysine" evidence="1">
    <location>
        <position position="14"/>
    </location>
</feature>
<feature type="non-terminal residue">
    <location>
        <position position="58"/>
    </location>
</feature>
<comment type="function">
    <text evidence="1">RuBisCO catalyzes two reactions: the carboxylation of D-ribulose 1,5-bisphosphate, the primary event in carbon dioxide fixation, as well as the oxidative fragmentation of the pentose substrate in the photorespiration process. Both reactions occur simultaneously and in competition at the same active site (By similarity).</text>
</comment>
<comment type="catalytic activity">
    <reaction>
        <text>2 (2R)-3-phosphoglycerate + 2 H(+) = D-ribulose 1,5-bisphosphate + CO2 + H2O</text>
        <dbReference type="Rhea" id="RHEA:23124"/>
        <dbReference type="ChEBI" id="CHEBI:15377"/>
        <dbReference type="ChEBI" id="CHEBI:15378"/>
        <dbReference type="ChEBI" id="CHEBI:16526"/>
        <dbReference type="ChEBI" id="CHEBI:57870"/>
        <dbReference type="ChEBI" id="CHEBI:58272"/>
        <dbReference type="EC" id="4.1.1.39"/>
    </reaction>
</comment>
<comment type="catalytic activity">
    <reaction>
        <text>D-ribulose 1,5-bisphosphate + O2 = 2-phosphoglycolate + (2R)-3-phosphoglycerate + 2 H(+)</text>
        <dbReference type="Rhea" id="RHEA:36631"/>
        <dbReference type="ChEBI" id="CHEBI:15378"/>
        <dbReference type="ChEBI" id="CHEBI:15379"/>
        <dbReference type="ChEBI" id="CHEBI:57870"/>
        <dbReference type="ChEBI" id="CHEBI:58033"/>
        <dbReference type="ChEBI" id="CHEBI:58272"/>
    </reaction>
</comment>
<comment type="subunit">
    <text evidence="1">Heterohexadecamer of 8 large chains and 8 small chains.</text>
</comment>
<comment type="subcellular location">
    <subcellularLocation>
        <location>Plastid</location>
        <location>Chloroplast</location>
    </subcellularLocation>
</comment>
<comment type="miscellaneous">
    <text evidence="1">The basic functional RuBisCO is composed of a large chain homodimer in a 'head-to-tail' conformation. In form I RuBisCO this homodimer is arranged in a barrel-like tetramer with the small subunits forming a tetrameric 'cap' on each end of the 'barrel' (By similarity).</text>
</comment>
<comment type="similarity">
    <text evidence="2">Belongs to the RuBisCO large chain family. Type I subfamily.</text>
</comment>
<organism>
    <name type="scientific">Euphorbia esula</name>
    <name type="common">Leafy spurge</name>
    <dbReference type="NCBI Taxonomy" id="3993"/>
    <lineage>
        <taxon>Eukaryota</taxon>
        <taxon>Viridiplantae</taxon>
        <taxon>Streptophyta</taxon>
        <taxon>Embryophyta</taxon>
        <taxon>Tracheophyta</taxon>
        <taxon>Spermatophyta</taxon>
        <taxon>Magnoliopsida</taxon>
        <taxon>eudicotyledons</taxon>
        <taxon>Gunneridae</taxon>
        <taxon>Pentapetalae</taxon>
        <taxon>rosids</taxon>
        <taxon>fabids</taxon>
        <taxon>Malpighiales</taxon>
        <taxon>Euphorbiaceae</taxon>
        <taxon>Euphorbioideae</taxon>
        <taxon>Euphorbieae</taxon>
        <taxon>Euphorbia</taxon>
        <taxon>Euphorbia subgen. Esula</taxon>
        <taxon>Euphorbia sect. Esula</taxon>
    </lineage>
</organism>
<geneLocation type="chloroplast"/>
<proteinExistence type="inferred from homology"/>
<keyword id="KW-0007">Acetylation</keyword>
<keyword id="KW-0113">Calvin cycle</keyword>
<keyword id="KW-0120">Carbon dioxide fixation</keyword>
<keyword id="KW-0150">Chloroplast</keyword>
<keyword id="KW-0456">Lyase</keyword>
<keyword id="KW-0488">Methylation</keyword>
<keyword id="KW-0503">Monooxygenase</keyword>
<keyword id="KW-0560">Oxidoreductase</keyword>
<keyword id="KW-0601">Photorespiration</keyword>
<keyword id="KW-0602">Photosynthesis</keyword>
<keyword id="KW-0934">Plastid</keyword>
<reference key="1">
    <citation type="journal article" date="1994" name="Mol. Phylogenet. Evol.">
        <title>Molecular phylogeny of families related to Celastrales based on rbcL 5' flanking sequences.</title>
        <authorList>
            <person name="Savolainen V."/>
            <person name="Manen J.F."/>
            <person name="Douzery E.J.P."/>
            <person name="Spichiger R."/>
        </authorList>
    </citation>
    <scope>NUCLEOTIDE SEQUENCE [GENOMIC DNA]</scope>
</reference>
<accession>P69569</accession>
<accession>P31187</accession>
<gene>
    <name type="primary">rbcL</name>
</gene>
<sequence length="58" mass="6237">MSPQTETKASVGFKAGVKDYKLTYYTPEYETKDTDILAAFRVTPQPGVPPEEAGAAVA</sequence>
<dbReference type="EC" id="4.1.1.39"/>
<dbReference type="EMBL" id="X69737">
    <property type="protein sequence ID" value="CAA49392.1"/>
    <property type="molecule type" value="Genomic_DNA"/>
</dbReference>
<dbReference type="PIR" id="S31550">
    <property type="entry name" value="S31550"/>
</dbReference>
<dbReference type="SMR" id="P69569"/>
<dbReference type="GO" id="GO:0009507">
    <property type="term" value="C:chloroplast"/>
    <property type="evidence" value="ECO:0007669"/>
    <property type="project" value="UniProtKB-SubCell"/>
</dbReference>
<dbReference type="GO" id="GO:0004497">
    <property type="term" value="F:monooxygenase activity"/>
    <property type="evidence" value="ECO:0007669"/>
    <property type="project" value="UniProtKB-KW"/>
</dbReference>
<dbReference type="GO" id="GO:0016984">
    <property type="term" value="F:ribulose-bisphosphate carboxylase activity"/>
    <property type="evidence" value="ECO:0007669"/>
    <property type="project" value="UniProtKB-EC"/>
</dbReference>
<dbReference type="GO" id="GO:0009853">
    <property type="term" value="P:photorespiration"/>
    <property type="evidence" value="ECO:0007669"/>
    <property type="project" value="UniProtKB-KW"/>
</dbReference>
<dbReference type="GO" id="GO:0019253">
    <property type="term" value="P:reductive pentose-phosphate cycle"/>
    <property type="evidence" value="ECO:0007669"/>
    <property type="project" value="UniProtKB-KW"/>
</dbReference>
<dbReference type="Gene3D" id="3.30.70.150">
    <property type="entry name" value="RuBisCO large subunit, N-terminal domain"/>
    <property type="match status" value="1"/>
</dbReference>
<dbReference type="InterPro" id="IPR033966">
    <property type="entry name" value="RuBisCO"/>
</dbReference>
<dbReference type="InterPro" id="IPR017443">
    <property type="entry name" value="RuBisCO_lsu_fd_N"/>
</dbReference>
<dbReference type="InterPro" id="IPR036422">
    <property type="entry name" value="RuBisCO_lsu_N_sf"/>
</dbReference>
<dbReference type="PANTHER" id="PTHR42704">
    <property type="entry name" value="RIBULOSE BISPHOSPHATE CARBOXYLASE"/>
    <property type="match status" value="1"/>
</dbReference>
<dbReference type="PANTHER" id="PTHR42704:SF15">
    <property type="entry name" value="RIBULOSE BISPHOSPHATE CARBOXYLASE LARGE CHAIN"/>
    <property type="match status" value="1"/>
</dbReference>
<dbReference type="Pfam" id="PF02788">
    <property type="entry name" value="RuBisCO_large_N"/>
    <property type="match status" value="1"/>
</dbReference>
<dbReference type="SUPFAM" id="SSF54966">
    <property type="entry name" value="RuBisCO, large subunit, small (N-terminal) domain"/>
    <property type="match status" value="1"/>
</dbReference>
<protein>
    <recommendedName>
        <fullName>Ribulose bisphosphate carboxylase large chain</fullName>
        <shortName>RuBisCO large subunit</shortName>
        <ecNumber>4.1.1.39</ecNumber>
    </recommendedName>
</protein>
<name>RBL_EUPES</name>